<feature type="chain" id="PRO_0000256552" description="Trigger factor">
    <location>
        <begin position="1"/>
        <end position="449"/>
    </location>
</feature>
<feature type="domain" description="PPIase FKBP-type" evidence="1">
    <location>
        <begin position="160"/>
        <end position="231"/>
    </location>
</feature>
<feature type="region of interest" description="Disordered" evidence="2">
    <location>
        <begin position="411"/>
        <end position="449"/>
    </location>
</feature>
<feature type="compositionally biased region" description="Low complexity" evidence="2">
    <location>
        <begin position="415"/>
        <end position="443"/>
    </location>
</feature>
<name>TIG_DEIGD</name>
<organism>
    <name type="scientific">Deinococcus geothermalis (strain DSM 11300 / CIP 105573 / AG-3a)</name>
    <dbReference type="NCBI Taxonomy" id="319795"/>
    <lineage>
        <taxon>Bacteria</taxon>
        <taxon>Thermotogati</taxon>
        <taxon>Deinococcota</taxon>
        <taxon>Deinococci</taxon>
        <taxon>Deinococcales</taxon>
        <taxon>Deinococcaceae</taxon>
        <taxon>Deinococcus</taxon>
    </lineage>
</organism>
<reference key="1">
    <citation type="submission" date="2006-04" db="EMBL/GenBank/DDBJ databases">
        <title>Complete sequence of chromosome of Deinococcus geothermalis DSM 11300.</title>
        <authorList>
            <person name="Copeland A."/>
            <person name="Lucas S."/>
            <person name="Lapidus A."/>
            <person name="Barry K."/>
            <person name="Detter J.C."/>
            <person name="Glavina del Rio T."/>
            <person name="Hammon N."/>
            <person name="Israni S."/>
            <person name="Dalin E."/>
            <person name="Tice H."/>
            <person name="Pitluck S."/>
            <person name="Brettin T."/>
            <person name="Bruce D."/>
            <person name="Han C."/>
            <person name="Tapia R."/>
            <person name="Saunders E."/>
            <person name="Gilna P."/>
            <person name="Schmutz J."/>
            <person name="Larimer F."/>
            <person name="Land M."/>
            <person name="Hauser L."/>
            <person name="Kyrpides N."/>
            <person name="Kim E."/>
            <person name="Daly M.J."/>
            <person name="Fredrickson J.K."/>
            <person name="Makarova K.S."/>
            <person name="Gaidamakova E.K."/>
            <person name="Zhai M."/>
            <person name="Richardson P."/>
        </authorList>
    </citation>
    <scope>NUCLEOTIDE SEQUENCE [LARGE SCALE GENOMIC DNA]</scope>
    <source>
        <strain>DSM 11300 / CIP 105573 / AG-3a</strain>
    </source>
</reference>
<proteinExistence type="inferred from homology"/>
<sequence>MAELISKEGNKVSFRVAVPAAEVNRAYDQVWAGLARDVRVPGFRPGKAPRKVLESRVGKGYVENEVRDRLLQVHYPQAARELKLSLVDARIEPEPLVSGQPFSFTVRGETYPEVTLGDWRAVQLTATAPEITDEVLNRTLSDLQERNATFQTVERPIEATDQVTIEELGEEGGSYPVYLDVAEPHVRDALIGKNVGDEVEITVPAHQHGDHEHPEHTVRVRVQSVQTKQLQPLDDEFARSLNFESLDRLRTDLRAELERRARQEGDAARREEFVNQLVEGMQVEIPQALIDRRREAMLEEIQDDLGRQGVKWSEYENFMREQGKLDEFLSDLAKNAESRVKRDLALEKLAEDLGVQLSDAEFSNTMNALAQANGLTPQQLQRQLGPNGINAYYISLTREKALQQALATLNGQQVAGRQEAGAEQTAQAAEQESGQPQAEGEQAAEQRGE</sequence>
<protein>
    <recommendedName>
        <fullName evidence="1">Trigger factor</fullName>
        <shortName evidence="1">TF</shortName>
        <ecNumber evidence="1">5.2.1.8</ecNumber>
    </recommendedName>
    <alternativeName>
        <fullName evidence="1">PPIase</fullName>
    </alternativeName>
</protein>
<accession>Q1J199</accession>
<dbReference type="EC" id="5.2.1.8" evidence="1"/>
<dbReference type="EMBL" id="CP000359">
    <property type="protein sequence ID" value="ABF44735.1"/>
    <property type="molecule type" value="Genomic_DNA"/>
</dbReference>
<dbReference type="RefSeq" id="WP_011529578.1">
    <property type="nucleotide sequence ID" value="NC_008025.1"/>
</dbReference>
<dbReference type="SMR" id="Q1J199"/>
<dbReference type="STRING" id="319795.Dgeo_0432"/>
<dbReference type="KEGG" id="dge:Dgeo_0432"/>
<dbReference type="eggNOG" id="COG0544">
    <property type="taxonomic scope" value="Bacteria"/>
</dbReference>
<dbReference type="HOGENOM" id="CLU_033058_3_1_0"/>
<dbReference type="Proteomes" id="UP000002431">
    <property type="component" value="Chromosome"/>
</dbReference>
<dbReference type="GO" id="GO:0005737">
    <property type="term" value="C:cytoplasm"/>
    <property type="evidence" value="ECO:0007669"/>
    <property type="project" value="UniProtKB-SubCell"/>
</dbReference>
<dbReference type="GO" id="GO:0003755">
    <property type="term" value="F:peptidyl-prolyl cis-trans isomerase activity"/>
    <property type="evidence" value="ECO:0007669"/>
    <property type="project" value="UniProtKB-UniRule"/>
</dbReference>
<dbReference type="GO" id="GO:0044183">
    <property type="term" value="F:protein folding chaperone"/>
    <property type="evidence" value="ECO:0007669"/>
    <property type="project" value="TreeGrafter"/>
</dbReference>
<dbReference type="GO" id="GO:0043022">
    <property type="term" value="F:ribosome binding"/>
    <property type="evidence" value="ECO:0007669"/>
    <property type="project" value="TreeGrafter"/>
</dbReference>
<dbReference type="GO" id="GO:0051083">
    <property type="term" value="P:'de novo' cotranslational protein folding"/>
    <property type="evidence" value="ECO:0007669"/>
    <property type="project" value="TreeGrafter"/>
</dbReference>
<dbReference type="GO" id="GO:0051301">
    <property type="term" value="P:cell division"/>
    <property type="evidence" value="ECO:0007669"/>
    <property type="project" value="UniProtKB-KW"/>
</dbReference>
<dbReference type="GO" id="GO:0061077">
    <property type="term" value="P:chaperone-mediated protein folding"/>
    <property type="evidence" value="ECO:0007669"/>
    <property type="project" value="TreeGrafter"/>
</dbReference>
<dbReference type="GO" id="GO:0015031">
    <property type="term" value="P:protein transport"/>
    <property type="evidence" value="ECO:0007669"/>
    <property type="project" value="UniProtKB-UniRule"/>
</dbReference>
<dbReference type="GO" id="GO:0043335">
    <property type="term" value="P:protein unfolding"/>
    <property type="evidence" value="ECO:0007669"/>
    <property type="project" value="TreeGrafter"/>
</dbReference>
<dbReference type="Gene3D" id="3.10.50.40">
    <property type="match status" value="1"/>
</dbReference>
<dbReference type="Gene3D" id="3.30.70.1050">
    <property type="entry name" value="Trigger factor ribosome-binding domain"/>
    <property type="match status" value="1"/>
</dbReference>
<dbReference type="Gene3D" id="1.10.3120.10">
    <property type="entry name" value="Trigger factor, C-terminal domain"/>
    <property type="match status" value="1"/>
</dbReference>
<dbReference type="HAMAP" id="MF_00303">
    <property type="entry name" value="Trigger_factor_Tig"/>
    <property type="match status" value="1"/>
</dbReference>
<dbReference type="InterPro" id="IPR046357">
    <property type="entry name" value="PPIase_dom_sf"/>
</dbReference>
<dbReference type="InterPro" id="IPR005215">
    <property type="entry name" value="Trig_fac"/>
</dbReference>
<dbReference type="InterPro" id="IPR008880">
    <property type="entry name" value="Trigger_fac_C"/>
</dbReference>
<dbReference type="InterPro" id="IPR037041">
    <property type="entry name" value="Trigger_fac_C_sf"/>
</dbReference>
<dbReference type="InterPro" id="IPR008881">
    <property type="entry name" value="Trigger_fac_ribosome-bd_bac"/>
</dbReference>
<dbReference type="InterPro" id="IPR036611">
    <property type="entry name" value="Trigger_fac_ribosome-bd_sf"/>
</dbReference>
<dbReference type="InterPro" id="IPR027304">
    <property type="entry name" value="Trigger_fact/SurA_dom_sf"/>
</dbReference>
<dbReference type="NCBIfam" id="TIGR00115">
    <property type="entry name" value="tig"/>
    <property type="match status" value="1"/>
</dbReference>
<dbReference type="PANTHER" id="PTHR30560">
    <property type="entry name" value="TRIGGER FACTOR CHAPERONE AND PEPTIDYL-PROLYL CIS/TRANS ISOMERASE"/>
    <property type="match status" value="1"/>
</dbReference>
<dbReference type="PANTHER" id="PTHR30560:SF3">
    <property type="entry name" value="TRIGGER FACTOR-LIKE PROTEIN TIG, CHLOROPLASTIC"/>
    <property type="match status" value="1"/>
</dbReference>
<dbReference type="Pfam" id="PF05698">
    <property type="entry name" value="Trigger_C"/>
    <property type="match status" value="1"/>
</dbReference>
<dbReference type="Pfam" id="PF05697">
    <property type="entry name" value="Trigger_N"/>
    <property type="match status" value="1"/>
</dbReference>
<dbReference type="PIRSF" id="PIRSF003095">
    <property type="entry name" value="Trigger_factor"/>
    <property type="match status" value="1"/>
</dbReference>
<dbReference type="SUPFAM" id="SSF54534">
    <property type="entry name" value="FKBP-like"/>
    <property type="match status" value="1"/>
</dbReference>
<dbReference type="SUPFAM" id="SSF109998">
    <property type="entry name" value="Triger factor/SurA peptide-binding domain-like"/>
    <property type="match status" value="1"/>
</dbReference>
<dbReference type="SUPFAM" id="SSF102735">
    <property type="entry name" value="Trigger factor ribosome-binding domain"/>
    <property type="match status" value="1"/>
</dbReference>
<keyword id="KW-0131">Cell cycle</keyword>
<keyword id="KW-0132">Cell division</keyword>
<keyword id="KW-0143">Chaperone</keyword>
<keyword id="KW-0963">Cytoplasm</keyword>
<keyword id="KW-0413">Isomerase</keyword>
<keyword id="KW-0697">Rotamase</keyword>
<evidence type="ECO:0000255" key="1">
    <source>
        <dbReference type="HAMAP-Rule" id="MF_00303"/>
    </source>
</evidence>
<evidence type="ECO:0000256" key="2">
    <source>
        <dbReference type="SAM" id="MobiDB-lite"/>
    </source>
</evidence>
<gene>
    <name evidence="1" type="primary">tig</name>
    <name type="ordered locus">Dgeo_0432</name>
</gene>
<comment type="function">
    <text evidence="1">Involved in protein export. Acts as a chaperone by maintaining the newly synthesized protein in an open conformation. Functions as a peptidyl-prolyl cis-trans isomerase.</text>
</comment>
<comment type="catalytic activity">
    <reaction evidence="1">
        <text>[protein]-peptidylproline (omega=180) = [protein]-peptidylproline (omega=0)</text>
        <dbReference type="Rhea" id="RHEA:16237"/>
        <dbReference type="Rhea" id="RHEA-COMP:10747"/>
        <dbReference type="Rhea" id="RHEA-COMP:10748"/>
        <dbReference type="ChEBI" id="CHEBI:83833"/>
        <dbReference type="ChEBI" id="CHEBI:83834"/>
        <dbReference type="EC" id="5.2.1.8"/>
    </reaction>
</comment>
<comment type="subcellular location">
    <subcellularLocation>
        <location>Cytoplasm</location>
    </subcellularLocation>
    <text evidence="1">About half TF is bound to the ribosome near the polypeptide exit tunnel while the other half is free in the cytoplasm.</text>
</comment>
<comment type="domain">
    <text evidence="1">Consists of 3 domains; the N-terminus binds the ribosome, the middle domain has PPIase activity, while the C-terminus has intrinsic chaperone activity on its own.</text>
</comment>
<comment type="similarity">
    <text evidence="1">Belongs to the FKBP-type PPIase family. Tig subfamily.</text>
</comment>